<protein>
    <recommendedName>
        <fullName evidence="2">ATP synthase subunit c</fullName>
    </recommendedName>
    <alternativeName>
        <fullName evidence="2">ATP synthase F(0) sector subunit c</fullName>
    </alternativeName>
    <alternativeName>
        <fullName evidence="2">F-type ATPase subunit c</fullName>
        <shortName evidence="2">F-ATPase subunit c</shortName>
    </alternativeName>
    <alternativeName>
        <fullName evidence="2">Lipid-binding protein</fullName>
    </alternativeName>
</protein>
<name>ATPL_HAEIN</name>
<organism>
    <name type="scientific">Haemophilus influenzae (strain ATCC 51907 / DSM 11121 / KW20 / Rd)</name>
    <dbReference type="NCBI Taxonomy" id="71421"/>
    <lineage>
        <taxon>Bacteria</taxon>
        <taxon>Pseudomonadati</taxon>
        <taxon>Pseudomonadota</taxon>
        <taxon>Gammaproteobacteria</taxon>
        <taxon>Pasteurellales</taxon>
        <taxon>Pasteurellaceae</taxon>
        <taxon>Haemophilus</taxon>
    </lineage>
</organism>
<comment type="function">
    <text evidence="2">F(1)F(0) ATP synthase produces ATP from ADP in the presence of a proton or sodium gradient. F-type ATPases consist of two structural domains, F(1) containing the extramembraneous catalytic core and F(0) containing the membrane proton channel, linked together by a central stalk and a peripheral stalk. During catalysis, ATP synthesis in the catalytic domain of F(1) is coupled via a rotary mechanism of the central stalk subunits to proton translocation.</text>
</comment>
<comment type="function">
    <text evidence="2">Key component of the F(0) channel; it plays a direct role in translocation across the membrane. A homomeric c-ring of between 10-14 subunits forms the central stalk rotor element with the F(1) delta and epsilon subunits.</text>
</comment>
<comment type="subunit">
    <text evidence="2">F-type ATPases have 2 components, F(1) - the catalytic core - and F(0) - the membrane proton channel. F(1) has five subunits: alpha(3), beta(3), gamma(1), delta(1), epsilon(1). F(0) has three main subunits: a(1), b(2) and c(10-14). The alpha and beta chains form an alternating ring which encloses part of the gamma chain. F(1) is attached to F(0) by a central stalk formed by the gamma and epsilon chains, while a peripheral stalk is formed by the delta and b chains.</text>
</comment>
<comment type="subcellular location">
    <subcellularLocation>
        <location evidence="2">Cell inner membrane</location>
        <topology evidence="2">Multi-pass membrane protein</topology>
    </subcellularLocation>
</comment>
<comment type="miscellaneous">
    <text evidence="1">Dicyclohexylcarbodiimide (DCDD) binding to the active aspartate residue inhibits ATPase in vitro.</text>
</comment>
<comment type="similarity">
    <text evidence="2">Belongs to the ATPase C chain family.</text>
</comment>
<gene>
    <name evidence="2" type="primary">atpE</name>
    <name type="ordered locus">HI_0484</name>
</gene>
<evidence type="ECO:0000250" key="1"/>
<evidence type="ECO:0000255" key="2">
    <source>
        <dbReference type="HAMAP-Rule" id="MF_01396"/>
    </source>
</evidence>
<proteinExistence type="inferred from homology"/>
<feature type="chain" id="PRO_0000112148" description="ATP synthase subunit c">
    <location>
        <begin position="1"/>
        <end position="84"/>
    </location>
</feature>
<feature type="transmembrane region" description="Helical" evidence="2">
    <location>
        <begin position="9"/>
        <end position="29"/>
    </location>
</feature>
<feature type="transmembrane region" description="Helical" evidence="2">
    <location>
        <begin position="54"/>
        <end position="74"/>
    </location>
</feature>
<feature type="site" description="Reversibly protonated during proton transport" evidence="2">
    <location>
        <position position="60"/>
    </location>
</feature>
<dbReference type="EMBL" id="L42023">
    <property type="protein sequence ID" value="AAC22142.1"/>
    <property type="molecule type" value="Genomic_DNA"/>
</dbReference>
<dbReference type="PIR" id="I64071">
    <property type="entry name" value="I64071"/>
</dbReference>
<dbReference type="RefSeq" id="NP_438644.1">
    <property type="nucleotide sequence ID" value="NC_000907.1"/>
</dbReference>
<dbReference type="SMR" id="P43721"/>
<dbReference type="STRING" id="71421.HI_0484"/>
<dbReference type="EnsemblBacteria" id="AAC22142">
    <property type="protein sequence ID" value="AAC22142"/>
    <property type="gene ID" value="HI_0484"/>
</dbReference>
<dbReference type="KEGG" id="hin:HI_0484"/>
<dbReference type="PATRIC" id="fig|71421.8.peg.503"/>
<dbReference type="eggNOG" id="ENOG5032S3K">
    <property type="taxonomic scope" value="Bacteria"/>
</dbReference>
<dbReference type="HOGENOM" id="CLU_148047_1_0_6"/>
<dbReference type="OrthoDB" id="9811659at2"/>
<dbReference type="PhylomeDB" id="P43721"/>
<dbReference type="BioCyc" id="HINF71421:G1GJ1-499-MONOMER"/>
<dbReference type="Proteomes" id="UP000000579">
    <property type="component" value="Chromosome"/>
</dbReference>
<dbReference type="GO" id="GO:0005886">
    <property type="term" value="C:plasma membrane"/>
    <property type="evidence" value="ECO:0007669"/>
    <property type="project" value="UniProtKB-SubCell"/>
</dbReference>
<dbReference type="GO" id="GO:0045259">
    <property type="term" value="C:proton-transporting ATP synthase complex"/>
    <property type="evidence" value="ECO:0007669"/>
    <property type="project" value="UniProtKB-KW"/>
</dbReference>
<dbReference type="GO" id="GO:0033177">
    <property type="term" value="C:proton-transporting two-sector ATPase complex, proton-transporting domain"/>
    <property type="evidence" value="ECO:0007669"/>
    <property type="project" value="InterPro"/>
</dbReference>
<dbReference type="GO" id="GO:0008289">
    <property type="term" value="F:lipid binding"/>
    <property type="evidence" value="ECO:0007669"/>
    <property type="project" value="UniProtKB-KW"/>
</dbReference>
<dbReference type="GO" id="GO:0046933">
    <property type="term" value="F:proton-transporting ATP synthase activity, rotational mechanism"/>
    <property type="evidence" value="ECO:0007669"/>
    <property type="project" value="UniProtKB-UniRule"/>
</dbReference>
<dbReference type="GO" id="GO:0015986">
    <property type="term" value="P:proton motive force-driven ATP synthesis"/>
    <property type="evidence" value="ECO:0000318"/>
    <property type="project" value="GO_Central"/>
</dbReference>
<dbReference type="CDD" id="cd18185">
    <property type="entry name" value="ATP-synt_Fo_c_ATPE"/>
    <property type="match status" value="1"/>
</dbReference>
<dbReference type="FunFam" id="1.20.20.10:FF:000002">
    <property type="entry name" value="ATP synthase subunit c"/>
    <property type="match status" value="1"/>
</dbReference>
<dbReference type="Gene3D" id="1.20.20.10">
    <property type="entry name" value="F1F0 ATP synthase subunit C"/>
    <property type="match status" value="1"/>
</dbReference>
<dbReference type="HAMAP" id="MF_01396">
    <property type="entry name" value="ATP_synth_c_bact"/>
    <property type="match status" value="1"/>
</dbReference>
<dbReference type="InterPro" id="IPR005953">
    <property type="entry name" value="ATP_synth_csu_bac/chlpt"/>
</dbReference>
<dbReference type="InterPro" id="IPR000454">
    <property type="entry name" value="ATP_synth_F0_csu"/>
</dbReference>
<dbReference type="InterPro" id="IPR020537">
    <property type="entry name" value="ATP_synth_F0_csu_DDCD_BS"/>
</dbReference>
<dbReference type="InterPro" id="IPR038662">
    <property type="entry name" value="ATP_synth_F0_csu_sf"/>
</dbReference>
<dbReference type="InterPro" id="IPR002379">
    <property type="entry name" value="ATPase_proteolipid_c-like_dom"/>
</dbReference>
<dbReference type="InterPro" id="IPR035921">
    <property type="entry name" value="F/V-ATP_Csub_sf"/>
</dbReference>
<dbReference type="NCBIfam" id="TIGR01260">
    <property type="entry name" value="ATP_synt_c"/>
    <property type="match status" value="1"/>
</dbReference>
<dbReference type="NCBIfam" id="NF005363">
    <property type="entry name" value="PRK06876.1"/>
    <property type="match status" value="1"/>
</dbReference>
<dbReference type="Pfam" id="PF00137">
    <property type="entry name" value="ATP-synt_C"/>
    <property type="match status" value="1"/>
</dbReference>
<dbReference type="PRINTS" id="PR00124">
    <property type="entry name" value="ATPASEC"/>
</dbReference>
<dbReference type="SUPFAM" id="SSF81333">
    <property type="entry name" value="F1F0 ATP synthase subunit C"/>
    <property type="match status" value="1"/>
</dbReference>
<dbReference type="PROSITE" id="PS00605">
    <property type="entry name" value="ATPASE_C"/>
    <property type="match status" value="1"/>
</dbReference>
<accession>P43721</accession>
<keyword id="KW-0066">ATP synthesis</keyword>
<keyword id="KW-0997">Cell inner membrane</keyword>
<keyword id="KW-1003">Cell membrane</keyword>
<keyword id="KW-0138">CF(0)</keyword>
<keyword id="KW-0375">Hydrogen ion transport</keyword>
<keyword id="KW-0406">Ion transport</keyword>
<keyword id="KW-0446">Lipid-binding</keyword>
<keyword id="KW-0472">Membrane</keyword>
<keyword id="KW-1185">Reference proteome</keyword>
<keyword id="KW-0812">Transmembrane</keyword>
<keyword id="KW-1133">Transmembrane helix</keyword>
<keyword id="KW-0813">Transport</keyword>
<reference key="1">
    <citation type="journal article" date="1995" name="Science">
        <title>Whole-genome random sequencing and assembly of Haemophilus influenzae Rd.</title>
        <authorList>
            <person name="Fleischmann R.D."/>
            <person name="Adams M.D."/>
            <person name="White O."/>
            <person name="Clayton R.A."/>
            <person name="Kirkness E.F."/>
            <person name="Kerlavage A.R."/>
            <person name="Bult C.J."/>
            <person name="Tomb J.-F."/>
            <person name="Dougherty B.A."/>
            <person name="Merrick J.M."/>
            <person name="McKenney K."/>
            <person name="Sutton G.G."/>
            <person name="FitzHugh W."/>
            <person name="Fields C.A."/>
            <person name="Gocayne J.D."/>
            <person name="Scott J.D."/>
            <person name="Shirley R."/>
            <person name="Liu L.-I."/>
            <person name="Glodek A."/>
            <person name="Kelley J.M."/>
            <person name="Weidman J.F."/>
            <person name="Phillips C.A."/>
            <person name="Spriggs T."/>
            <person name="Hedblom E."/>
            <person name="Cotton M.D."/>
            <person name="Utterback T.R."/>
            <person name="Hanna M.C."/>
            <person name="Nguyen D.T."/>
            <person name="Saudek D.M."/>
            <person name="Brandon R.C."/>
            <person name="Fine L.D."/>
            <person name="Fritchman J.L."/>
            <person name="Fuhrmann J.L."/>
            <person name="Geoghagen N.S.M."/>
            <person name="Gnehm C.L."/>
            <person name="McDonald L.A."/>
            <person name="Small K.V."/>
            <person name="Fraser C.M."/>
            <person name="Smith H.O."/>
            <person name="Venter J.C."/>
        </authorList>
    </citation>
    <scope>NUCLEOTIDE SEQUENCE [LARGE SCALE GENOMIC DNA]</scope>
    <source>
        <strain>ATCC 51907 / DSM 11121 / KW20 / Rd</strain>
    </source>
</reference>
<sequence>METVITATIIGASILLAFAALGTAIGFAILGGKFLESSARQPELASSLQTKMFIVAGLLDAIAMIAVGISLLFIFANPFIGLLN</sequence>